<organism>
    <name type="scientific">Ruegeria sp. (strain TM1040)</name>
    <name type="common">Silicibacter sp.</name>
    <dbReference type="NCBI Taxonomy" id="292414"/>
    <lineage>
        <taxon>Bacteria</taxon>
        <taxon>Pseudomonadati</taxon>
        <taxon>Pseudomonadota</taxon>
        <taxon>Alphaproteobacteria</taxon>
        <taxon>Rhodobacterales</taxon>
        <taxon>Roseobacteraceae</taxon>
        <taxon>Ruegeria</taxon>
    </lineage>
</organism>
<dbReference type="EC" id="7.6.2.-" evidence="1"/>
<dbReference type="EMBL" id="CP000377">
    <property type="protein sequence ID" value="ABF63076.1"/>
    <property type="molecule type" value="Genomic_DNA"/>
</dbReference>
<dbReference type="RefSeq" id="WP_011537691.1">
    <property type="nucleotide sequence ID" value="NC_008044.1"/>
</dbReference>
<dbReference type="SMR" id="Q1GJU0"/>
<dbReference type="STRING" id="292414.TM1040_0343"/>
<dbReference type="KEGG" id="sit:TM1040_0343"/>
<dbReference type="eggNOG" id="COG4559">
    <property type="taxonomic scope" value="Bacteria"/>
</dbReference>
<dbReference type="HOGENOM" id="CLU_000604_1_11_5"/>
<dbReference type="OrthoDB" id="9805601at2"/>
<dbReference type="Proteomes" id="UP000000636">
    <property type="component" value="Chromosome"/>
</dbReference>
<dbReference type="GO" id="GO:0005886">
    <property type="term" value="C:plasma membrane"/>
    <property type="evidence" value="ECO:0007669"/>
    <property type="project" value="UniProtKB-SubCell"/>
</dbReference>
<dbReference type="GO" id="GO:0005524">
    <property type="term" value="F:ATP binding"/>
    <property type="evidence" value="ECO:0007669"/>
    <property type="project" value="UniProtKB-KW"/>
</dbReference>
<dbReference type="GO" id="GO:0016887">
    <property type="term" value="F:ATP hydrolysis activity"/>
    <property type="evidence" value="ECO:0007669"/>
    <property type="project" value="InterPro"/>
</dbReference>
<dbReference type="CDD" id="cd03214">
    <property type="entry name" value="ABC_Iron-Siderophores_B12_Hemin"/>
    <property type="match status" value="1"/>
</dbReference>
<dbReference type="Gene3D" id="3.40.50.300">
    <property type="entry name" value="P-loop containing nucleotide triphosphate hydrolases"/>
    <property type="match status" value="1"/>
</dbReference>
<dbReference type="InterPro" id="IPR003593">
    <property type="entry name" value="AAA+_ATPase"/>
</dbReference>
<dbReference type="InterPro" id="IPR003439">
    <property type="entry name" value="ABC_transporter-like_ATP-bd"/>
</dbReference>
<dbReference type="InterPro" id="IPR017871">
    <property type="entry name" value="ABC_transporter-like_CS"/>
</dbReference>
<dbReference type="InterPro" id="IPR027417">
    <property type="entry name" value="P-loop_NTPase"/>
</dbReference>
<dbReference type="NCBIfam" id="NF010068">
    <property type="entry name" value="PRK13548.1"/>
    <property type="match status" value="1"/>
</dbReference>
<dbReference type="PANTHER" id="PTHR42794">
    <property type="entry name" value="HEMIN IMPORT ATP-BINDING PROTEIN HMUV"/>
    <property type="match status" value="1"/>
</dbReference>
<dbReference type="PANTHER" id="PTHR42794:SF1">
    <property type="entry name" value="HEMIN IMPORT ATP-BINDING PROTEIN HMUV"/>
    <property type="match status" value="1"/>
</dbReference>
<dbReference type="Pfam" id="PF00005">
    <property type="entry name" value="ABC_tran"/>
    <property type="match status" value="1"/>
</dbReference>
<dbReference type="SMART" id="SM00382">
    <property type="entry name" value="AAA"/>
    <property type="match status" value="1"/>
</dbReference>
<dbReference type="SUPFAM" id="SSF52540">
    <property type="entry name" value="P-loop containing nucleoside triphosphate hydrolases"/>
    <property type="match status" value="1"/>
</dbReference>
<dbReference type="PROSITE" id="PS00211">
    <property type="entry name" value="ABC_TRANSPORTER_1"/>
    <property type="match status" value="1"/>
</dbReference>
<dbReference type="PROSITE" id="PS50893">
    <property type="entry name" value="ABC_TRANSPORTER_2"/>
    <property type="match status" value="1"/>
</dbReference>
<dbReference type="PROSITE" id="PS51261">
    <property type="entry name" value="HMUV"/>
    <property type="match status" value="1"/>
</dbReference>
<protein>
    <recommendedName>
        <fullName evidence="1">Hemin import ATP-binding protein HmuV</fullName>
        <ecNumber evidence="1">7.6.2.-</ecNumber>
    </recommendedName>
</protein>
<accession>Q1GJU0</accession>
<feature type="chain" id="PRO_0000269629" description="Hemin import ATP-binding protein HmuV">
    <location>
        <begin position="1"/>
        <end position="260"/>
    </location>
</feature>
<feature type="domain" description="ABC transporter" evidence="1">
    <location>
        <begin position="3"/>
        <end position="239"/>
    </location>
</feature>
<feature type="binding site" evidence="1">
    <location>
        <begin position="35"/>
        <end position="42"/>
    </location>
    <ligand>
        <name>ATP</name>
        <dbReference type="ChEBI" id="CHEBI:30616"/>
    </ligand>
</feature>
<evidence type="ECO:0000255" key="1">
    <source>
        <dbReference type="HAMAP-Rule" id="MF_01718"/>
    </source>
</evidence>
<gene>
    <name evidence="1" type="primary">hmuV</name>
    <name type="ordered locus">TM1040_0343</name>
</gene>
<keyword id="KW-0067">ATP-binding</keyword>
<keyword id="KW-0997">Cell inner membrane</keyword>
<keyword id="KW-1003">Cell membrane</keyword>
<keyword id="KW-0472">Membrane</keyword>
<keyword id="KW-0547">Nucleotide-binding</keyword>
<keyword id="KW-1185">Reference proteome</keyword>
<keyword id="KW-1278">Translocase</keyword>
<keyword id="KW-0813">Transport</keyword>
<comment type="function">
    <text evidence="1">Part of the ABC transporter complex HmuTUV involved in hemin import. Responsible for energy coupling to the transport system.</text>
</comment>
<comment type="subunit">
    <text evidence="1">The complex is composed of two ATP-binding proteins (HmuV), two transmembrane proteins (HmuU) and a solute-binding protein (HmuT).</text>
</comment>
<comment type="subcellular location">
    <subcellularLocation>
        <location evidence="1">Cell inner membrane</location>
        <topology evidence="1">Peripheral membrane protein</topology>
    </subcellularLocation>
</comment>
<comment type="similarity">
    <text evidence="1">Belongs to the ABC transporter superfamily. Heme (hemin) importer (TC 3.A.1.14.5) family.</text>
</comment>
<proteinExistence type="inferred from homology"/>
<sequence>MTLHAQQISLSIGKKQILKDVTFAARAGALSAIVGPNGSGKSTLLKALVAELPSEGQISLNGRLLQDYAAWELASLRGVLPQAAHLAFPFTVLEVVRLGLMAGPEAQNTRLPFEALARVDLEGYAGRSYQELSGGEQQRVQLARVLAQVGAPMREGQPCWLFLDEPVSSLDIAHQLTVMDIARQFADGGGGVVAVMHDLNLTAMYADHVHVMTGGETAGAGTVADVLTDQRLSEVYGCDLRIGKVPADAAVFVLPQTARA</sequence>
<reference key="1">
    <citation type="submission" date="2006-05" db="EMBL/GenBank/DDBJ databases">
        <title>Complete sequence of chromosome of Silicibacter sp. TM1040.</title>
        <authorList>
            <consortium name="US DOE Joint Genome Institute"/>
            <person name="Copeland A."/>
            <person name="Lucas S."/>
            <person name="Lapidus A."/>
            <person name="Barry K."/>
            <person name="Detter J.C."/>
            <person name="Glavina del Rio T."/>
            <person name="Hammon N."/>
            <person name="Israni S."/>
            <person name="Dalin E."/>
            <person name="Tice H."/>
            <person name="Pitluck S."/>
            <person name="Brettin T."/>
            <person name="Bruce D."/>
            <person name="Han C."/>
            <person name="Tapia R."/>
            <person name="Goodwin L."/>
            <person name="Thompson L.S."/>
            <person name="Gilna P."/>
            <person name="Schmutz J."/>
            <person name="Larimer F."/>
            <person name="Land M."/>
            <person name="Hauser L."/>
            <person name="Kyrpides N."/>
            <person name="Kim E."/>
            <person name="Belas R."/>
            <person name="Moran M.A."/>
            <person name="Buchan A."/>
            <person name="Gonzalez J.M."/>
            <person name="Schell M.A."/>
            <person name="Sun F."/>
            <person name="Richardson P."/>
        </authorList>
    </citation>
    <scope>NUCLEOTIDE SEQUENCE [LARGE SCALE GENOMIC DNA]</scope>
    <source>
        <strain>TM1040</strain>
    </source>
</reference>
<name>HMUV_RUEST</name>